<sequence length="111" mass="12942">MSDIFRFDTEEQTLTKEKIKLKKPSKYRVIILNDDFTPMEFVVWILQMVFHRSRAESQQIMLKAHITGKALCGVYSHDVARTKVAQVQQLAEQHGYPLHCTMEVEEGEEES</sequence>
<organism>
    <name type="scientific">Leptospira interrogans serogroup Icterohaemorrhagiae serovar copenhageni (strain Fiocruz L1-130)</name>
    <dbReference type="NCBI Taxonomy" id="267671"/>
    <lineage>
        <taxon>Bacteria</taxon>
        <taxon>Pseudomonadati</taxon>
        <taxon>Spirochaetota</taxon>
        <taxon>Spirochaetia</taxon>
        <taxon>Leptospirales</taxon>
        <taxon>Leptospiraceae</taxon>
        <taxon>Leptospira</taxon>
    </lineage>
</organism>
<accession>Q72RD1</accession>
<protein>
    <recommendedName>
        <fullName evidence="1">ATP-dependent Clp protease adapter protein ClpS</fullName>
    </recommendedName>
</protein>
<name>CLPS_LEPIC</name>
<reference key="1">
    <citation type="journal article" date="2004" name="J. Bacteriol.">
        <title>Comparative genomics of two Leptospira interrogans serovars reveals novel insights into physiology and pathogenesis.</title>
        <authorList>
            <person name="Nascimento A.L.T.O."/>
            <person name="Ko A.I."/>
            <person name="Martins E.A.L."/>
            <person name="Monteiro-Vitorello C.B."/>
            <person name="Ho P.L."/>
            <person name="Haake D.A."/>
            <person name="Verjovski-Almeida S."/>
            <person name="Hartskeerl R.A."/>
            <person name="Marques M.V."/>
            <person name="Oliveira M.C."/>
            <person name="Menck C.F.M."/>
            <person name="Leite L.C.C."/>
            <person name="Carrer H."/>
            <person name="Coutinho L.L."/>
            <person name="Degrave W.M."/>
            <person name="Dellagostin O.A."/>
            <person name="El-Dorry H."/>
            <person name="Ferro E.S."/>
            <person name="Ferro M.I.T."/>
            <person name="Furlan L.R."/>
            <person name="Gamberini M."/>
            <person name="Giglioti E.A."/>
            <person name="Goes-Neto A."/>
            <person name="Goldman G.H."/>
            <person name="Goldman M.H.S."/>
            <person name="Harakava R."/>
            <person name="Jeronimo S.M.B."/>
            <person name="Junqueira-de-Azevedo I.L.M."/>
            <person name="Kimura E.T."/>
            <person name="Kuramae E.E."/>
            <person name="Lemos E.G.M."/>
            <person name="Lemos M.V.F."/>
            <person name="Marino C.L."/>
            <person name="Nunes L.R."/>
            <person name="de Oliveira R.C."/>
            <person name="Pereira G.G."/>
            <person name="Reis M.S."/>
            <person name="Schriefer A."/>
            <person name="Siqueira W.J."/>
            <person name="Sommer P."/>
            <person name="Tsai S.M."/>
            <person name="Simpson A.J.G."/>
            <person name="Ferro J.A."/>
            <person name="Camargo L.E.A."/>
            <person name="Kitajima J.P."/>
            <person name="Setubal J.C."/>
            <person name="Van Sluys M.A."/>
        </authorList>
    </citation>
    <scope>NUCLEOTIDE SEQUENCE [LARGE SCALE GENOMIC DNA]</scope>
    <source>
        <strain>Fiocruz L1-130</strain>
    </source>
</reference>
<feature type="chain" id="PRO_0000215720" description="ATP-dependent Clp protease adapter protein ClpS">
    <location>
        <begin position="1"/>
        <end position="111"/>
    </location>
</feature>
<evidence type="ECO:0000255" key="1">
    <source>
        <dbReference type="HAMAP-Rule" id="MF_00302"/>
    </source>
</evidence>
<gene>
    <name evidence="1" type="primary">clpS</name>
    <name type="ordered locus">LIC_11815</name>
</gene>
<dbReference type="EMBL" id="AE016823">
    <property type="protein sequence ID" value="AAS70403.1"/>
    <property type="molecule type" value="Genomic_DNA"/>
</dbReference>
<dbReference type="RefSeq" id="WP_001279894.1">
    <property type="nucleotide sequence ID" value="NC_005823.1"/>
</dbReference>
<dbReference type="SMR" id="Q72RD1"/>
<dbReference type="GeneID" id="61141711"/>
<dbReference type="KEGG" id="lic:LIC_11815"/>
<dbReference type="HOGENOM" id="CLU_134358_1_0_12"/>
<dbReference type="Proteomes" id="UP000007037">
    <property type="component" value="Chromosome I"/>
</dbReference>
<dbReference type="GO" id="GO:0030163">
    <property type="term" value="P:protein catabolic process"/>
    <property type="evidence" value="ECO:0007669"/>
    <property type="project" value="InterPro"/>
</dbReference>
<dbReference type="GO" id="GO:0006508">
    <property type="term" value="P:proteolysis"/>
    <property type="evidence" value="ECO:0007669"/>
    <property type="project" value="UniProtKB-UniRule"/>
</dbReference>
<dbReference type="FunFam" id="3.30.1390.10:FF:000002">
    <property type="entry name" value="ATP-dependent Clp protease adapter protein ClpS"/>
    <property type="match status" value="1"/>
</dbReference>
<dbReference type="Gene3D" id="3.30.1390.10">
    <property type="match status" value="1"/>
</dbReference>
<dbReference type="HAMAP" id="MF_00302">
    <property type="entry name" value="ClpS"/>
    <property type="match status" value="1"/>
</dbReference>
<dbReference type="InterPro" id="IPR022935">
    <property type="entry name" value="ClpS"/>
</dbReference>
<dbReference type="InterPro" id="IPR003769">
    <property type="entry name" value="ClpS_core"/>
</dbReference>
<dbReference type="InterPro" id="IPR014719">
    <property type="entry name" value="Ribosomal_bL12_C/ClpS-like"/>
</dbReference>
<dbReference type="NCBIfam" id="NF000672">
    <property type="entry name" value="PRK00033.1-5"/>
    <property type="match status" value="1"/>
</dbReference>
<dbReference type="PANTHER" id="PTHR33473:SF19">
    <property type="entry name" value="ATP-DEPENDENT CLP PROTEASE ADAPTER PROTEIN CLPS"/>
    <property type="match status" value="1"/>
</dbReference>
<dbReference type="PANTHER" id="PTHR33473">
    <property type="entry name" value="ATP-DEPENDENT CLP PROTEASE ADAPTER PROTEIN CLPS1, CHLOROPLASTIC"/>
    <property type="match status" value="1"/>
</dbReference>
<dbReference type="Pfam" id="PF02617">
    <property type="entry name" value="ClpS"/>
    <property type="match status" value="1"/>
</dbReference>
<dbReference type="SUPFAM" id="SSF54736">
    <property type="entry name" value="ClpS-like"/>
    <property type="match status" value="1"/>
</dbReference>
<proteinExistence type="inferred from homology"/>
<comment type="function">
    <text evidence="1">Involved in the modulation of the specificity of the ClpAP-mediated ATP-dependent protein degradation.</text>
</comment>
<comment type="subunit">
    <text evidence="1">Binds to the N-terminal domain of the chaperone ClpA.</text>
</comment>
<comment type="similarity">
    <text evidence="1">Belongs to the ClpS family.</text>
</comment>